<accession>A4IJG0</accession>
<dbReference type="EC" id="2.7.14.1" evidence="1"/>
<dbReference type="EMBL" id="CP000557">
    <property type="protein sequence ID" value="ABO65464.1"/>
    <property type="molecule type" value="Genomic_DNA"/>
</dbReference>
<dbReference type="RefSeq" id="WP_011886620.1">
    <property type="nucleotide sequence ID" value="NC_009328.1"/>
</dbReference>
<dbReference type="SMR" id="A4IJG0"/>
<dbReference type="GeneID" id="87622355"/>
<dbReference type="KEGG" id="gtn:GTNG_0077"/>
<dbReference type="eggNOG" id="COG3869">
    <property type="taxonomic scope" value="Bacteria"/>
</dbReference>
<dbReference type="HOGENOM" id="CLU_066591_1_0_9"/>
<dbReference type="Proteomes" id="UP000001578">
    <property type="component" value="Chromosome"/>
</dbReference>
<dbReference type="GO" id="GO:0005615">
    <property type="term" value="C:extracellular space"/>
    <property type="evidence" value="ECO:0007669"/>
    <property type="project" value="TreeGrafter"/>
</dbReference>
<dbReference type="GO" id="GO:0005524">
    <property type="term" value="F:ATP binding"/>
    <property type="evidence" value="ECO:0007669"/>
    <property type="project" value="UniProtKB-KW"/>
</dbReference>
<dbReference type="GO" id="GO:0004111">
    <property type="term" value="F:creatine kinase activity"/>
    <property type="evidence" value="ECO:0007669"/>
    <property type="project" value="InterPro"/>
</dbReference>
<dbReference type="GO" id="GO:0004672">
    <property type="term" value="F:protein kinase activity"/>
    <property type="evidence" value="ECO:0007669"/>
    <property type="project" value="UniProtKB-UniRule"/>
</dbReference>
<dbReference type="GO" id="GO:0046314">
    <property type="term" value="P:phosphocreatine biosynthetic process"/>
    <property type="evidence" value="ECO:0007669"/>
    <property type="project" value="InterPro"/>
</dbReference>
<dbReference type="CDD" id="cd07930">
    <property type="entry name" value="bacterial_phosphagen_kinase"/>
    <property type="match status" value="1"/>
</dbReference>
<dbReference type="FunFam" id="3.30.590.10:FF:000007">
    <property type="entry name" value="Protein-arginine kinase"/>
    <property type="match status" value="1"/>
</dbReference>
<dbReference type="Gene3D" id="3.30.590.10">
    <property type="entry name" value="Glutamine synthetase/guanido kinase, catalytic domain"/>
    <property type="match status" value="1"/>
</dbReference>
<dbReference type="HAMAP" id="MF_00602">
    <property type="entry name" value="Prot_Arg_kinase"/>
    <property type="match status" value="1"/>
</dbReference>
<dbReference type="InterPro" id="IPR023660">
    <property type="entry name" value="Arg_Kinase"/>
</dbReference>
<dbReference type="InterPro" id="IPR000749">
    <property type="entry name" value="ATP-guanido_PTrfase"/>
</dbReference>
<dbReference type="InterPro" id="IPR022415">
    <property type="entry name" value="ATP-guanido_PTrfase_AS"/>
</dbReference>
<dbReference type="InterPro" id="IPR022414">
    <property type="entry name" value="ATP-guanido_PTrfase_cat"/>
</dbReference>
<dbReference type="InterPro" id="IPR014746">
    <property type="entry name" value="Gln_synth/guanido_kin_cat_dom"/>
</dbReference>
<dbReference type="NCBIfam" id="NF002194">
    <property type="entry name" value="PRK01059.1-4"/>
    <property type="match status" value="1"/>
</dbReference>
<dbReference type="NCBIfam" id="NF002195">
    <property type="entry name" value="PRK01059.1-5"/>
    <property type="match status" value="1"/>
</dbReference>
<dbReference type="PANTHER" id="PTHR11547:SF38">
    <property type="entry name" value="ARGININE KINASE 1-RELATED"/>
    <property type="match status" value="1"/>
</dbReference>
<dbReference type="PANTHER" id="PTHR11547">
    <property type="entry name" value="ARGININE OR CREATINE KINASE"/>
    <property type="match status" value="1"/>
</dbReference>
<dbReference type="Pfam" id="PF00217">
    <property type="entry name" value="ATP-gua_Ptrans"/>
    <property type="match status" value="1"/>
</dbReference>
<dbReference type="SUPFAM" id="SSF55931">
    <property type="entry name" value="Glutamine synthetase/guanido kinase"/>
    <property type="match status" value="1"/>
</dbReference>
<dbReference type="PROSITE" id="PS00112">
    <property type="entry name" value="PHOSPHAGEN_KINASE"/>
    <property type="match status" value="1"/>
</dbReference>
<dbReference type="PROSITE" id="PS51510">
    <property type="entry name" value="PHOSPHAGEN_KINASE_C"/>
    <property type="match status" value="1"/>
</dbReference>
<feature type="chain" id="PRO_1000025875" description="Protein-arginine kinase">
    <location>
        <begin position="1"/>
        <end position="363"/>
    </location>
</feature>
<feature type="domain" description="Phosphagen kinase C-terminal" evidence="1">
    <location>
        <begin position="24"/>
        <end position="255"/>
    </location>
</feature>
<feature type="short sequence motif" description="RDXXRA motif of the pArg binding pocket involved in allosteric regulation" evidence="1">
    <location>
        <begin position="338"/>
        <end position="343"/>
    </location>
</feature>
<feature type="binding site" evidence="1">
    <location>
        <begin position="27"/>
        <end position="31"/>
    </location>
    <ligand>
        <name>ATP</name>
        <dbReference type="ChEBI" id="CHEBI:30616"/>
    </ligand>
</feature>
<feature type="binding site" evidence="1">
    <location>
        <position position="92"/>
    </location>
    <ligand>
        <name>ATP</name>
        <dbReference type="ChEBI" id="CHEBI:30616"/>
    </ligand>
</feature>
<feature type="binding site" evidence="1">
    <location>
        <position position="126"/>
    </location>
    <ligand>
        <name>ATP</name>
        <dbReference type="ChEBI" id="CHEBI:30616"/>
    </ligand>
</feature>
<feature type="binding site" evidence="1">
    <location>
        <begin position="177"/>
        <end position="181"/>
    </location>
    <ligand>
        <name>ATP</name>
        <dbReference type="ChEBI" id="CHEBI:30616"/>
    </ligand>
</feature>
<feature type="binding site" evidence="1">
    <location>
        <begin position="208"/>
        <end position="213"/>
    </location>
    <ligand>
        <name>ATP</name>
        <dbReference type="ChEBI" id="CHEBI:30616"/>
    </ligand>
</feature>
<proteinExistence type="inferred from homology"/>
<gene>
    <name evidence="1" type="primary">mcsB</name>
    <name type="ordered locus">GTNG_0077</name>
</gene>
<sequence length="363" mass="40874">MSFEKFFNTAVSAWMSQEGPDSDIVLSSRIRLARNIVDFRFPTLFSSEEAMQIVALFERTFAYRSYGGAGRFELLKMSELQPIEKRVLVEKHLISPHLAEDSPFGACLLSENEEISIMINEEDHIRIQCLFPGLQLAEALEAASELDDWIEGHVNYAFDERLGYLTSCPTNVGTGLRASVMMHLPALVLTQQINRIIPAINQLGLVVRGTYGEGSEALGNIFQISNQLTLGKSEEDIIADLHTIVQQLIAQERAARQALVKTLGIQLEDKVFRSYGILANCRVIESKEAAQCLSDVRLGIDLGYIKNVSRNILNELMILTQPGFLQQYAGGALRPEERDVRRAALIRERLKMEERRKMEGDER</sequence>
<reference key="1">
    <citation type="journal article" date="2007" name="Proc. Natl. Acad. Sci. U.S.A.">
        <title>Genome and proteome of long-chain alkane degrading Geobacillus thermodenitrificans NG80-2 isolated from a deep-subsurface oil reservoir.</title>
        <authorList>
            <person name="Feng L."/>
            <person name="Wang W."/>
            <person name="Cheng J."/>
            <person name="Ren Y."/>
            <person name="Zhao G."/>
            <person name="Gao C."/>
            <person name="Tang Y."/>
            <person name="Liu X."/>
            <person name="Han W."/>
            <person name="Peng X."/>
            <person name="Liu R."/>
            <person name="Wang L."/>
        </authorList>
    </citation>
    <scope>NUCLEOTIDE SEQUENCE [LARGE SCALE GENOMIC DNA]</scope>
    <source>
        <strain>NG80-2</strain>
    </source>
</reference>
<comment type="function">
    <text evidence="1">Catalyzes the specific phosphorylation of arginine residues in a large number of proteins. Is part of the bacterial stress response system. Protein arginine phosphorylation has a physiologically important role and is involved in the regulation of many critical cellular processes, such as protein homeostasis, motility, competence, and stringent and stress responses, by regulating gene expression and protein activity.</text>
</comment>
<comment type="catalytic activity">
    <reaction evidence="1">
        <text>L-arginyl-[protein] + ATP = N(omega)-phospho-L-arginyl-[protein] + ADP + H(+)</text>
        <dbReference type="Rhea" id="RHEA:43384"/>
        <dbReference type="Rhea" id="RHEA-COMP:10532"/>
        <dbReference type="Rhea" id="RHEA-COMP:10533"/>
        <dbReference type="ChEBI" id="CHEBI:15378"/>
        <dbReference type="ChEBI" id="CHEBI:29965"/>
        <dbReference type="ChEBI" id="CHEBI:30616"/>
        <dbReference type="ChEBI" id="CHEBI:83226"/>
        <dbReference type="ChEBI" id="CHEBI:456216"/>
        <dbReference type="EC" id="2.7.14.1"/>
    </reaction>
</comment>
<comment type="activity regulation">
    <text evidence="1">Appears to be allosterically activated by the binding of pArg-containing polypeptides to the pArg-binding pocket localized in the C-terminal domain of McsB.</text>
</comment>
<comment type="similarity">
    <text evidence="1">Belongs to the ATP:guanido phosphotransferase family.</text>
</comment>
<protein>
    <recommendedName>
        <fullName evidence="1">Protein-arginine kinase</fullName>
        <ecNumber evidence="1">2.7.14.1</ecNumber>
    </recommendedName>
</protein>
<name>MCSB_GEOTN</name>
<organism>
    <name type="scientific">Geobacillus thermodenitrificans (strain NG80-2)</name>
    <dbReference type="NCBI Taxonomy" id="420246"/>
    <lineage>
        <taxon>Bacteria</taxon>
        <taxon>Bacillati</taxon>
        <taxon>Bacillota</taxon>
        <taxon>Bacilli</taxon>
        <taxon>Bacillales</taxon>
        <taxon>Anoxybacillaceae</taxon>
        <taxon>Geobacillus</taxon>
    </lineage>
</organism>
<keyword id="KW-0021">Allosteric enzyme</keyword>
<keyword id="KW-0067">ATP-binding</keyword>
<keyword id="KW-0418">Kinase</keyword>
<keyword id="KW-0547">Nucleotide-binding</keyword>
<keyword id="KW-0808">Transferase</keyword>
<evidence type="ECO:0000255" key="1">
    <source>
        <dbReference type="HAMAP-Rule" id="MF_00602"/>
    </source>
</evidence>